<feature type="chain" id="PRO_0000374606" description="tRNA-2-methylthio-N(6)-dimethylallyladenosine synthase">
    <location>
        <begin position="1"/>
        <end position="471"/>
    </location>
</feature>
<feature type="domain" description="MTTase N-terminal" evidence="1">
    <location>
        <begin position="31"/>
        <end position="149"/>
    </location>
</feature>
<feature type="domain" description="Radical SAM core" evidence="2">
    <location>
        <begin position="172"/>
        <end position="402"/>
    </location>
</feature>
<feature type="domain" description="TRAM" evidence="1">
    <location>
        <begin position="405"/>
        <end position="468"/>
    </location>
</feature>
<feature type="binding site" evidence="1">
    <location>
        <position position="40"/>
    </location>
    <ligand>
        <name>[4Fe-4S] cluster</name>
        <dbReference type="ChEBI" id="CHEBI:49883"/>
        <label>1</label>
    </ligand>
</feature>
<feature type="binding site" evidence="1">
    <location>
        <position position="76"/>
    </location>
    <ligand>
        <name>[4Fe-4S] cluster</name>
        <dbReference type="ChEBI" id="CHEBI:49883"/>
        <label>1</label>
    </ligand>
</feature>
<feature type="binding site" evidence="1">
    <location>
        <position position="110"/>
    </location>
    <ligand>
        <name>[4Fe-4S] cluster</name>
        <dbReference type="ChEBI" id="CHEBI:49883"/>
        <label>1</label>
    </ligand>
</feature>
<feature type="binding site" evidence="1">
    <location>
        <position position="186"/>
    </location>
    <ligand>
        <name>[4Fe-4S] cluster</name>
        <dbReference type="ChEBI" id="CHEBI:49883"/>
        <label>2</label>
        <note>4Fe-4S-S-AdoMet</note>
    </ligand>
</feature>
<feature type="binding site" evidence="1">
    <location>
        <position position="190"/>
    </location>
    <ligand>
        <name>[4Fe-4S] cluster</name>
        <dbReference type="ChEBI" id="CHEBI:49883"/>
        <label>2</label>
        <note>4Fe-4S-S-AdoMet</note>
    </ligand>
</feature>
<feature type="binding site" evidence="1">
    <location>
        <position position="193"/>
    </location>
    <ligand>
        <name>[4Fe-4S] cluster</name>
        <dbReference type="ChEBI" id="CHEBI:49883"/>
        <label>2</label>
        <note>4Fe-4S-S-AdoMet</note>
    </ligand>
</feature>
<organism>
    <name type="scientific">Thermoanaerobacter pseudethanolicus (strain ATCC 33223 / 39E)</name>
    <name type="common">Clostridium thermohydrosulfuricum</name>
    <dbReference type="NCBI Taxonomy" id="340099"/>
    <lineage>
        <taxon>Bacteria</taxon>
        <taxon>Bacillati</taxon>
        <taxon>Bacillota</taxon>
        <taxon>Clostridia</taxon>
        <taxon>Thermoanaerobacterales</taxon>
        <taxon>Thermoanaerobacteraceae</taxon>
        <taxon>Thermoanaerobacter</taxon>
    </lineage>
</organism>
<reference key="1">
    <citation type="submission" date="2008-01" db="EMBL/GenBank/DDBJ databases">
        <title>Complete sequence of Thermoanaerobacter pseudethanolicus 39E.</title>
        <authorList>
            <person name="Copeland A."/>
            <person name="Lucas S."/>
            <person name="Lapidus A."/>
            <person name="Barry K."/>
            <person name="Glavina del Rio T."/>
            <person name="Dalin E."/>
            <person name="Tice H."/>
            <person name="Pitluck S."/>
            <person name="Bruce D."/>
            <person name="Goodwin L."/>
            <person name="Saunders E."/>
            <person name="Brettin T."/>
            <person name="Detter J.C."/>
            <person name="Han C."/>
            <person name="Schmutz J."/>
            <person name="Larimer F."/>
            <person name="Land M."/>
            <person name="Hauser L."/>
            <person name="Kyrpides N."/>
            <person name="Lykidis A."/>
            <person name="Hemme C."/>
            <person name="Fields M.W."/>
            <person name="He Z."/>
            <person name="Zhou J."/>
            <person name="Richardson P."/>
        </authorList>
    </citation>
    <scope>NUCLEOTIDE SEQUENCE [LARGE SCALE GENOMIC DNA]</scope>
    <source>
        <strain>ATCC 33223 / DSM 2355 / 39E</strain>
    </source>
</reference>
<proteinExistence type="inferred from homology"/>
<comment type="function">
    <text evidence="1">Catalyzes the methylthiolation of N6-(dimethylallyl)adenosine (i(6)A), leading to the formation of 2-methylthio-N6-(dimethylallyl)adenosine (ms(2)i(6)A) at position 37 in tRNAs that read codons beginning with uridine.</text>
</comment>
<comment type="catalytic activity">
    <reaction evidence="1">
        <text>N(6)-dimethylallyladenosine(37) in tRNA + (sulfur carrier)-SH + AH2 + 2 S-adenosyl-L-methionine = 2-methylsulfanyl-N(6)-dimethylallyladenosine(37) in tRNA + (sulfur carrier)-H + 5'-deoxyadenosine + L-methionine + A + S-adenosyl-L-homocysteine + 2 H(+)</text>
        <dbReference type="Rhea" id="RHEA:37067"/>
        <dbReference type="Rhea" id="RHEA-COMP:10375"/>
        <dbReference type="Rhea" id="RHEA-COMP:10376"/>
        <dbReference type="Rhea" id="RHEA-COMP:14737"/>
        <dbReference type="Rhea" id="RHEA-COMP:14739"/>
        <dbReference type="ChEBI" id="CHEBI:13193"/>
        <dbReference type="ChEBI" id="CHEBI:15378"/>
        <dbReference type="ChEBI" id="CHEBI:17319"/>
        <dbReference type="ChEBI" id="CHEBI:17499"/>
        <dbReference type="ChEBI" id="CHEBI:29917"/>
        <dbReference type="ChEBI" id="CHEBI:57844"/>
        <dbReference type="ChEBI" id="CHEBI:57856"/>
        <dbReference type="ChEBI" id="CHEBI:59789"/>
        <dbReference type="ChEBI" id="CHEBI:64428"/>
        <dbReference type="ChEBI" id="CHEBI:74415"/>
        <dbReference type="ChEBI" id="CHEBI:74417"/>
        <dbReference type="EC" id="2.8.4.3"/>
    </reaction>
</comment>
<comment type="cofactor">
    <cofactor evidence="1">
        <name>[4Fe-4S] cluster</name>
        <dbReference type="ChEBI" id="CHEBI:49883"/>
    </cofactor>
    <text evidence="1">Binds 2 [4Fe-4S] clusters. One cluster is coordinated with 3 cysteines and an exchangeable S-adenosyl-L-methionine.</text>
</comment>
<comment type="subunit">
    <text evidence="1">Monomer.</text>
</comment>
<comment type="subcellular location">
    <subcellularLocation>
        <location evidence="1">Cytoplasm</location>
    </subcellularLocation>
</comment>
<comment type="similarity">
    <text evidence="1">Belongs to the methylthiotransferase family. MiaB subfamily.</text>
</comment>
<keyword id="KW-0004">4Fe-4S</keyword>
<keyword id="KW-0963">Cytoplasm</keyword>
<keyword id="KW-0408">Iron</keyword>
<keyword id="KW-0411">Iron-sulfur</keyword>
<keyword id="KW-0479">Metal-binding</keyword>
<keyword id="KW-1185">Reference proteome</keyword>
<keyword id="KW-0949">S-adenosyl-L-methionine</keyword>
<keyword id="KW-0808">Transferase</keyword>
<keyword id="KW-0819">tRNA processing</keyword>
<sequence length="471" mass="54280">MPTNIYVTEEELKKQEKIMKEIAEENKGKNLYYHIETYGCQMNVHDSEKLAGMLEKMGYKYTENLEQADVLLFNTCAVREHAEIRVLGRVSQMKELKARNPNLIIGVSGCMMQEKNVVEAIKEKYSYIDIVFGTHNIYKFPQLLWEALNSQDIVIDIIEDTKNVIEELPVKRDSNLKAWVNIIYGCNNFCTYCIVPYTRGREKSRKPEDIIAEVKELAQKGYKEITLLGQNVNSYGKDLDEDITFAKLLYKLNDIEGIERIRFMTSHPKDISDELIYAIRDLDKVCEHLHLPVQAGSNKILKKMNRKYTKEHYLEIIDKVRSNIPDIAITTDIIVGFPGETEEDFLETLDLVERVRFDAAYTFIYSKRAGTVAANMPDQVDDAVKHERLERLIELQNKISLEKSAELRGKIVEVLIEGISKRDSNKLTSRTRTNKVVHFVGDESLIGKLANVKITETKAWTMQGELVEVIR</sequence>
<evidence type="ECO:0000255" key="1">
    <source>
        <dbReference type="HAMAP-Rule" id="MF_01864"/>
    </source>
</evidence>
<evidence type="ECO:0000255" key="2">
    <source>
        <dbReference type="PROSITE-ProRule" id="PRU01266"/>
    </source>
</evidence>
<dbReference type="EC" id="2.8.4.3" evidence="1"/>
<dbReference type="EMBL" id="CP000924">
    <property type="protein sequence ID" value="ABY94827.1"/>
    <property type="molecule type" value="Genomic_DNA"/>
</dbReference>
<dbReference type="RefSeq" id="WP_003869101.1">
    <property type="nucleotide sequence ID" value="NC_010321.1"/>
</dbReference>
<dbReference type="SMR" id="B0K9L4"/>
<dbReference type="STRING" id="340099.Teth39_1173"/>
<dbReference type="KEGG" id="tpd:Teth39_1173"/>
<dbReference type="eggNOG" id="COG0621">
    <property type="taxonomic scope" value="Bacteria"/>
</dbReference>
<dbReference type="HOGENOM" id="CLU_018697_2_0_9"/>
<dbReference type="Proteomes" id="UP000002156">
    <property type="component" value="Chromosome"/>
</dbReference>
<dbReference type="GO" id="GO:0005829">
    <property type="term" value="C:cytosol"/>
    <property type="evidence" value="ECO:0007669"/>
    <property type="project" value="TreeGrafter"/>
</dbReference>
<dbReference type="GO" id="GO:0051539">
    <property type="term" value="F:4 iron, 4 sulfur cluster binding"/>
    <property type="evidence" value="ECO:0007669"/>
    <property type="project" value="UniProtKB-UniRule"/>
</dbReference>
<dbReference type="GO" id="GO:0046872">
    <property type="term" value="F:metal ion binding"/>
    <property type="evidence" value="ECO:0007669"/>
    <property type="project" value="UniProtKB-KW"/>
</dbReference>
<dbReference type="GO" id="GO:0035597">
    <property type="term" value="F:N6-isopentenyladenosine methylthiotransferase activity"/>
    <property type="evidence" value="ECO:0007669"/>
    <property type="project" value="TreeGrafter"/>
</dbReference>
<dbReference type="CDD" id="cd01335">
    <property type="entry name" value="Radical_SAM"/>
    <property type="match status" value="1"/>
</dbReference>
<dbReference type="FunFam" id="3.40.50.12160:FF:000006">
    <property type="entry name" value="tRNA-2-methylthio-N(6)-dimethylallyladenosine synthase"/>
    <property type="match status" value="1"/>
</dbReference>
<dbReference type="FunFam" id="3.80.30.20:FF:000001">
    <property type="entry name" value="tRNA-2-methylthio-N(6)-dimethylallyladenosine synthase 2"/>
    <property type="match status" value="1"/>
</dbReference>
<dbReference type="Gene3D" id="3.40.50.12160">
    <property type="entry name" value="Methylthiotransferase, N-terminal domain"/>
    <property type="match status" value="1"/>
</dbReference>
<dbReference type="Gene3D" id="3.80.30.20">
    <property type="entry name" value="tm_1862 like domain"/>
    <property type="match status" value="1"/>
</dbReference>
<dbReference type="HAMAP" id="MF_01864">
    <property type="entry name" value="tRNA_metthiotr_MiaB"/>
    <property type="match status" value="1"/>
</dbReference>
<dbReference type="InterPro" id="IPR006638">
    <property type="entry name" value="Elp3/MiaA/NifB-like_rSAM"/>
</dbReference>
<dbReference type="InterPro" id="IPR005839">
    <property type="entry name" value="Methylthiotransferase"/>
</dbReference>
<dbReference type="InterPro" id="IPR020612">
    <property type="entry name" value="Methylthiotransferase_CS"/>
</dbReference>
<dbReference type="InterPro" id="IPR013848">
    <property type="entry name" value="Methylthiotransferase_N"/>
</dbReference>
<dbReference type="InterPro" id="IPR038135">
    <property type="entry name" value="Methylthiotransferase_N_sf"/>
</dbReference>
<dbReference type="InterPro" id="IPR006463">
    <property type="entry name" value="MiaB_methiolase"/>
</dbReference>
<dbReference type="InterPro" id="IPR007197">
    <property type="entry name" value="rSAM"/>
</dbReference>
<dbReference type="InterPro" id="IPR023404">
    <property type="entry name" value="rSAM_horseshoe"/>
</dbReference>
<dbReference type="InterPro" id="IPR002792">
    <property type="entry name" value="TRAM_dom"/>
</dbReference>
<dbReference type="NCBIfam" id="TIGR01574">
    <property type="entry name" value="miaB-methiolase"/>
    <property type="match status" value="1"/>
</dbReference>
<dbReference type="NCBIfam" id="TIGR00089">
    <property type="entry name" value="MiaB/RimO family radical SAM methylthiotransferase"/>
    <property type="match status" value="1"/>
</dbReference>
<dbReference type="PANTHER" id="PTHR43020">
    <property type="entry name" value="CDK5 REGULATORY SUBUNIT-ASSOCIATED PROTEIN 1"/>
    <property type="match status" value="1"/>
</dbReference>
<dbReference type="PANTHER" id="PTHR43020:SF2">
    <property type="entry name" value="MITOCHONDRIAL TRNA METHYLTHIOTRANSFERASE CDK5RAP1"/>
    <property type="match status" value="1"/>
</dbReference>
<dbReference type="Pfam" id="PF04055">
    <property type="entry name" value="Radical_SAM"/>
    <property type="match status" value="1"/>
</dbReference>
<dbReference type="Pfam" id="PF01938">
    <property type="entry name" value="TRAM"/>
    <property type="match status" value="1"/>
</dbReference>
<dbReference type="Pfam" id="PF00919">
    <property type="entry name" value="UPF0004"/>
    <property type="match status" value="1"/>
</dbReference>
<dbReference type="SFLD" id="SFLDF00273">
    <property type="entry name" value="(dimethylallyl)adenosine_tRNA"/>
    <property type="match status" value="1"/>
</dbReference>
<dbReference type="SFLD" id="SFLDG01082">
    <property type="entry name" value="B12-binding_domain_containing"/>
    <property type="match status" value="1"/>
</dbReference>
<dbReference type="SFLD" id="SFLDG01061">
    <property type="entry name" value="methylthiotransferase"/>
    <property type="match status" value="1"/>
</dbReference>
<dbReference type="SMART" id="SM00729">
    <property type="entry name" value="Elp3"/>
    <property type="match status" value="1"/>
</dbReference>
<dbReference type="SUPFAM" id="SSF102114">
    <property type="entry name" value="Radical SAM enzymes"/>
    <property type="match status" value="1"/>
</dbReference>
<dbReference type="PROSITE" id="PS51449">
    <property type="entry name" value="MTTASE_N"/>
    <property type="match status" value="1"/>
</dbReference>
<dbReference type="PROSITE" id="PS01278">
    <property type="entry name" value="MTTASE_RADICAL"/>
    <property type="match status" value="1"/>
</dbReference>
<dbReference type="PROSITE" id="PS51918">
    <property type="entry name" value="RADICAL_SAM"/>
    <property type="match status" value="1"/>
</dbReference>
<dbReference type="PROSITE" id="PS50926">
    <property type="entry name" value="TRAM"/>
    <property type="match status" value="1"/>
</dbReference>
<gene>
    <name evidence="1" type="primary">miaB</name>
    <name type="ordered locus">Teth39_1173</name>
</gene>
<name>MIAB_THEP3</name>
<accession>B0K9L4</accession>
<protein>
    <recommendedName>
        <fullName evidence="1">tRNA-2-methylthio-N(6)-dimethylallyladenosine synthase</fullName>
        <ecNumber evidence="1">2.8.4.3</ecNumber>
    </recommendedName>
    <alternativeName>
        <fullName evidence="1">(Dimethylallyl)adenosine tRNA methylthiotransferase MiaB</fullName>
    </alternativeName>
    <alternativeName>
        <fullName evidence="1">tRNA-i(6)A37 methylthiotransferase</fullName>
    </alternativeName>
</protein>